<dbReference type="EMBL" id="AP009552">
    <property type="protein sequence ID" value="BAG03479.1"/>
    <property type="molecule type" value="Genomic_DNA"/>
</dbReference>
<dbReference type="SMR" id="B0JNP9"/>
<dbReference type="STRING" id="449447.MAE_36570"/>
<dbReference type="PaxDb" id="449447-MAE_36570"/>
<dbReference type="EnsemblBacteria" id="BAG03479">
    <property type="protein sequence ID" value="BAG03479"/>
    <property type="gene ID" value="MAE_36570"/>
</dbReference>
<dbReference type="KEGG" id="mar:MAE_36570"/>
<dbReference type="HOGENOM" id="CLU_205504_0_0_3"/>
<dbReference type="BioCyc" id="MAER449447:MAE_RS15830-MONOMER"/>
<dbReference type="Proteomes" id="UP000001510">
    <property type="component" value="Chromosome"/>
</dbReference>
<dbReference type="GO" id="GO:0031676">
    <property type="term" value="C:plasma membrane-derived thylakoid membrane"/>
    <property type="evidence" value="ECO:0007669"/>
    <property type="project" value="UniProtKB-SubCell"/>
</dbReference>
<dbReference type="GO" id="GO:0015979">
    <property type="term" value="P:photosynthesis"/>
    <property type="evidence" value="ECO:0007669"/>
    <property type="project" value="InterPro"/>
</dbReference>
<dbReference type="HAMAP" id="MF_00293">
    <property type="entry name" value="PSII_PsbN"/>
    <property type="match status" value="1"/>
</dbReference>
<dbReference type="InterPro" id="IPR003398">
    <property type="entry name" value="PSII_PsbN"/>
</dbReference>
<dbReference type="PANTHER" id="PTHR35326">
    <property type="entry name" value="PROTEIN PSBN"/>
    <property type="match status" value="1"/>
</dbReference>
<dbReference type="PANTHER" id="PTHR35326:SF3">
    <property type="entry name" value="PROTEIN PSBN"/>
    <property type="match status" value="1"/>
</dbReference>
<dbReference type="Pfam" id="PF02468">
    <property type="entry name" value="PsbN"/>
    <property type="match status" value="1"/>
</dbReference>
<evidence type="ECO:0000255" key="1">
    <source>
        <dbReference type="HAMAP-Rule" id="MF_00293"/>
    </source>
</evidence>
<reference key="1">
    <citation type="journal article" date="2007" name="DNA Res.">
        <title>Complete genomic structure of the bloom-forming toxic cyanobacterium Microcystis aeruginosa NIES-843.</title>
        <authorList>
            <person name="Kaneko T."/>
            <person name="Nakajima N."/>
            <person name="Okamoto S."/>
            <person name="Suzuki I."/>
            <person name="Tanabe Y."/>
            <person name="Tamaoki M."/>
            <person name="Nakamura Y."/>
            <person name="Kasai F."/>
            <person name="Watanabe A."/>
            <person name="Kawashima K."/>
            <person name="Kishida Y."/>
            <person name="Ono A."/>
            <person name="Shimizu Y."/>
            <person name="Takahashi C."/>
            <person name="Minami C."/>
            <person name="Fujishiro T."/>
            <person name="Kohara M."/>
            <person name="Katoh M."/>
            <person name="Nakazaki N."/>
            <person name="Nakayama S."/>
            <person name="Yamada M."/>
            <person name="Tabata S."/>
            <person name="Watanabe M.M."/>
        </authorList>
    </citation>
    <scope>NUCLEOTIDE SEQUENCE [LARGE SCALE GENOMIC DNA]</scope>
    <source>
        <strain>NIES-843 / IAM M-247</strain>
    </source>
</reference>
<comment type="function">
    <text evidence="1">May play a role in photosystem I and II biogenesis.</text>
</comment>
<comment type="subcellular location">
    <subcellularLocation>
        <location evidence="1">Cellular thylakoid membrane</location>
        <topology evidence="1">Single-pass membrane protein</topology>
    </subcellularLocation>
</comment>
<comment type="similarity">
    <text evidence="1">Belongs to the PsbN family.</text>
</comment>
<comment type="caution">
    <text evidence="1">Originally thought to be a component of PSII; based on experiments in Synechocystis, N.tabacum and barley, and its absence from PSII in T.elongatus and T.vulcanus, this is probably not true.</text>
</comment>
<organism>
    <name type="scientific">Microcystis aeruginosa (strain NIES-843 / IAM M-2473)</name>
    <dbReference type="NCBI Taxonomy" id="449447"/>
    <lineage>
        <taxon>Bacteria</taxon>
        <taxon>Bacillati</taxon>
        <taxon>Cyanobacteriota</taxon>
        <taxon>Cyanophyceae</taxon>
        <taxon>Oscillatoriophycideae</taxon>
        <taxon>Chroococcales</taxon>
        <taxon>Microcystaceae</taxon>
        <taxon>Microcystis</taxon>
    </lineage>
</organism>
<accession>B0JNP9</accession>
<name>PSBN1_MICAN</name>
<proteinExistence type="inferred from homology"/>
<keyword id="KW-0472">Membrane</keyword>
<keyword id="KW-0793">Thylakoid</keyword>
<keyword id="KW-0812">Transmembrane</keyword>
<keyword id="KW-1133">Transmembrane helix</keyword>
<feature type="chain" id="PRO_0000362167" description="Protein PsbN 1">
    <location>
        <begin position="1"/>
        <end position="43"/>
    </location>
</feature>
<feature type="transmembrane region" description="Helical" evidence="1">
    <location>
        <begin position="3"/>
        <end position="23"/>
    </location>
</feature>
<gene>
    <name evidence="1" type="primary">psbN1</name>
    <name type="ordered locus">MAE_36570</name>
</gene>
<protein>
    <recommendedName>
        <fullName evidence="1">Protein PsbN 1</fullName>
    </recommendedName>
</protein>
<sequence length="43" mass="4396">METATILGILIAAAVVGITVLALDTAFGPPAAELSDPFEDHED</sequence>